<gene>
    <name evidence="1" type="primary">rpl24</name>
    <name type="ordered locus">STK_04215</name>
    <name type="ORF">STS060</name>
</gene>
<keyword id="KW-1185">Reference proteome</keyword>
<keyword id="KW-0687">Ribonucleoprotein</keyword>
<keyword id="KW-0689">Ribosomal protein</keyword>
<keyword id="KW-0694">RNA-binding</keyword>
<keyword id="KW-0699">rRNA-binding</keyword>
<organism>
    <name type="scientific">Sulfurisphaera tokodaii (strain DSM 16993 / JCM 10545 / NBRC 100140 / 7)</name>
    <name type="common">Sulfolobus tokodaii</name>
    <dbReference type="NCBI Taxonomy" id="273063"/>
    <lineage>
        <taxon>Archaea</taxon>
        <taxon>Thermoproteota</taxon>
        <taxon>Thermoprotei</taxon>
        <taxon>Sulfolobales</taxon>
        <taxon>Sulfolobaceae</taxon>
        <taxon>Sulfurisphaera</taxon>
    </lineage>
</organism>
<sequence length="137" mass="16013">MVSHKPSKQRLLLYNLPKHQRHKLLTAKLSKELQQQYGIKRLAIRKGDTVKVMRGDKDVLNFEGKVVEVNRKTGRIAIEGLTRKKADGTPVYRWIHASKVIITKLDLSDAKRKEIIERKRKAREEYLKKKEQTTEAK</sequence>
<reference key="1">
    <citation type="journal article" date="2001" name="DNA Res.">
        <title>Complete genome sequence of an aerobic thermoacidophilic Crenarchaeon, Sulfolobus tokodaii strain7.</title>
        <authorList>
            <person name="Kawarabayasi Y."/>
            <person name="Hino Y."/>
            <person name="Horikawa H."/>
            <person name="Jin-no K."/>
            <person name="Takahashi M."/>
            <person name="Sekine M."/>
            <person name="Baba S."/>
            <person name="Ankai A."/>
            <person name="Kosugi H."/>
            <person name="Hosoyama A."/>
            <person name="Fukui S."/>
            <person name="Nagai Y."/>
            <person name="Nishijima K."/>
            <person name="Otsuka R."/>
            <person name="Nakazawa H."/>
            <person name="Takamiya M."/>
            <person name="Kato Y."/>
            <person name="Yoshizawa T."/>
            <person name="Tanaka T."/>
            <person name="Kudoh Y."/>
            <person name="Yamazaki J."/>
            <person name="Kushida N."/>
            <person name="Oguchi A."/>
            <person name="Aoki K."/>
            <person name="Masuda S."/>
            <person name="Yanagii M."/>
            <person name="Nishimura M."/>
            <person name="Yamagishi A."/>
            <person name="Oshima T."/>
            <person name="Kikuchi H."/>
        </authorList>
    </citation>
    <scope>NUCLEOTIDE SEQUENCE [LARGE SCALE GENOMIC DNA]</scope>
    <source>
        <strain>DSM 16993 / JCM 10545 / NBRC 100140 / 7</strain>
    </source>
</reference>
<name>RL24_SULTO</name>
<accession>Q975J1</accession>
<dbReference type="EMBL" id="BA000023">
    <property type="protein sequence ID" value="BAB65409.1"/>
    <property type="status" value="ALT_INIT"/>
    <property type="molecule type" value="Genomic_DNA"/>
</dbReference>
<dbReference type="SMR" id="Q975J1"/>
<dbReference type="STRING" id="273063.STK_04215"/>
<dbReference type="KEGG" id="sto:STK_04215"/>
<dbReference type="PATRIC" id="fig|273063.9.peg.489"/>
<dbReference type="eggNOG" id="arCOG04094">
    <property type="taxonomic scope" value="Archaea"/>
</dbReference>
<dbReference type="OrthoDB" id="10899at2157"/>
<dbReference type="Proteomes" id="UP000001015">
    <property type="component" value="Chromosome"/>
</dbReference>
<dbReference type="GO" id="GO:0015934">
    <property type="term" value="C:large ribosomal subunit"/>
    <property type="evidence" value="ECO:0007669"/>
    <property type="project" value="InterPro"/>
</dbReference>
<dbReference type="GO" id="GO:0019843">
    <property type="term" value="F:rRNA binding"/>
    <property type="evidence" value="ECO:0007669"/>
    <property type="project" value="UniProtKB-UniRule"/>
</dbReference>
<dbReference type="GO" id="GO:0003735">
    <property type="term" value="F:structural constituent of ribosome"/>
    <property type="evidence" value="ECO:0007669"/>
    <property type="project" value="InterPro"/>
</dbReference>
<dbReference type="GO" id="GO:0006412">
    <property type="term" value="P:translation"/>
    <property type="evidence" value="ECO:0007669"/>
    <property type="project" value="UniProtKB-UniRule"/>
</dbReference>
<dbReference type="CDD" id="cd06089">
    <property type="entry name" value="KOW_RPL26"/>
    <property type="match status" value="1"/>
</dbReference>
<dbReference type="FunFam" id="2.30.30.30:FF:000009">
    <property type="entry name" value="60S ribosomal protein L26"/>
    <property type="match status" value="1"/>
</dbReference>
<dbReference type="Gene3D" id="2.30.30.30">
    <property type="match status" value="1"/>
</dbReference>
<dbReference type="HAMAP" id="MF_01326_A">
    <property type="entry name" value="Ribosomal_uL24_A"/>
    <property type="match status" value="1"/>
</dbReference>
<dbReference type="InterPro" id="IPR014722">
    <property type="entry name" value="Rib_uL2_dom2"/>
</dbReference>
<dbReference type="InterPro" id="IPR005756">
    <property type="entry name" value="Ribosomal_uL24_euk/arc"/>
</dbReference>
<dbReference type="InterPro" id="IPR041988">
    <property type="entry name" value="Ribosomal_uL24_KOW"/>
</dbReference>
<dbReference type="InterPro" id="IPR008991">
    <property type="entry name" value="Translation_prot_SH3-like_sf"/>
</dbReference>
<dbReference type="NCBIfam" id="TIGR01080">
    <property type="entry name" value="rplX_A_E"/>
    <property type="match status" value="1"/>
</dbReference>
<dbReference type="PANTHER" id="PTHR11143">
    <property type="entry name" value="60S RIBOSOMAL PROTEIN L26 FAMILY MEMBER"/>
    <property type="match status" value="1"/>
</dbReference>
<dbReference type="Pfam" id="PF16906">
    <property type="entry name" value="Ribosomal_L26"/>
    <property type="match status" value="1"/>
</dbReference>
<dbReference type="SUPFAM" id="SSF50104">
    <property type="entry name" value="Translation proteins SH3-like domain"/>
    <property type="match status" value="1"/>
</dbReference>
<evidence type="ECO:0000255" key="1">
    <source>
        <dbReference type="HAMAP-Rule" id="MF_01326"/>
    </source>
</evidence>
<evidence type="ECO:0000305" key="2"/>
<proteinExistence type="inferred from homology"/>
<comment type="function">
    <text evidence="1">One of two assembly initiator proteins, it binds directly to the 5'-end of the 23S rRNA, where it nucleates assembly of the 50S subunit.</text>
</comment>
<comment type="function">
    <text evidence="1">Located at the polypeptide exit tunnel on the outside of the subunit.</text>
</comment>
<comment type="subunit">
    <text evidence="1">Part of the 50S ribosomal subunit.</text>
</comment>
<comment type="similarity">
    <text evidence="1">Belongs to the universal ribosomal protein uL24 family.</text>
</comment>
<comment type="sequence caution" evidence="2">
    <conflict type="erroneous initiation">
        <sequence resource="EMBL-CDS" id="BAB65409"/>
    </conflict>
    <text>Truncated N-terminus.</text>
</comment>
<feature type="chain" id="PRO_0000130783" description="Large ribosomal subunit protein uL24">
    <location>
        <begin position="1"/>
        <end position="137"/>
    </location>
</feature>
<protein>
    <recommendedName>
        <fullName evidence="1">Large ribosomal subunit protein uL24</fullName>
    </recommendedName>
    <alternativeName>
        <fullName evidence="2">50S ribosomal protein L24</fullName>
    </alternativeName>
</protein>